<sequence>MNPLISAASVIAAGLAVGLASIGPGVGQGTAAGQAVEGIARQPEAEGKIRGTLLLSLAFMEALTIYGLVVALALLFANPFV</sequence>
<organism>
    <name type="scientific">Platanus occidentalis</name>
    <name type="common">Sycamore</name>
    <name type="synonym">American plane tree</name>
    <dbReference type="NCBI Taxonomy" id="4403"/>
    <lineage>
        <taxon>Eukaryota</taxon>
        <taxon>Viridiplantae</taxon>
        <taxon>Streptophyta</taxon>
        <taxon>Embryophyta</taxon>
        <taxon>Tracheophyta</taxon>
        <taxon>Spermatophyta</taxon>
        <taxon>Magnoliopsida</taxon>
        <taxon>Proteales</taxon>
        <taxon>Platanaceae</taxon>
        <taxon>Platanus</taxon>
    </lineage>
</organism>
<dbReference type="EMBL" id="DQ923116">
    <property type="protein sequence ID" value="ABI49765.1"/>
    <property type="molecule type" value="Genomic_DNA"/>
</dbReference>
<dbReference type="RefSeq" id="YP_740552.1">
    <property type="nucleotide sequence ID" value="NC_008335.1"/>
</dbReference>
<dbReference type="SMR" id="Q09G59"/>
<dbReference type="GeneID" id="4271284"/>
<dbReference type="GO" id="GO:0009535">
    <property type="term" value="C:chloroplast thylakoid membrane"/>
    <property type="evidence" value="ECO:0007669"/>
    <property type="project" value="UniProtKB-SubCell"/>
</dbReference>
<dbReference type="GO" id="GO:0045259">
    <property type="term" value="C:proton-transporting ATP synthase complex"/>
    <property type="evidence" value="ECO:0007669"/>
    <property type="project" value="UniProtKB-KW"/>
</dbReference>
<dbReference type="GO" id="GO:0033177">
    <property type="term" value="C:proton-transporting two-sector ATPase complex, proton-transporting domain"/>
    <property type="evidence" value="ECO:0007669"/>
    <property type="project" value="InterPro"/>
</dbReference>
<dbReference type="GO" id="GO:0008289">
    <property type="term" value="F:lipid binding"/>
    <property type="evidence" value="ECO:0007669"/>
    <property type="project" value="UniProtKB-KW"/>
</dbReference>
<dbReference type="GO" id="GO:0046933">
    <property type="term" value="F:proton-transporting ATP synthase activity, rotational mechanism"/>
    <property type="evidence" value="ECO:0007669"/>
    <property type="project" value="UniProtKB-UniRule"/>
</dbReference>
<dbReference type="CDD" id="cd18183">
    <property type="entry name" value="ATP-synt_Fo_c_ATPH"/>
    <property type="match status" value="1"/>
</dbReference>
<dbReference type="FunFam" id="1.20.20.10:FF:000001">
    <property type="entry name" value="ATP synthase subunit c, chloroplastic"/>
    <property type="match status" value="1"/>
</dbReference>
<dbReference type="Gene3D" id="1.20.20.10">
    <property type="entry name" value="F1F0 ATP synthase subunit C"/>
    <property type="match status" value="1"/>
</dbReference>
<dbReference type="HAMAP" id="MF_01396">
    <property type="entry name" value="ATP_synth_c_bact"/>
    <property type="match status" value="1"/>
</dbReference>
<dbReference type="InterPro" id="IPR005953">
    <property type="entry name" value="ATP_synth_csu_bac/chlpt"/>
</dbReference>
<dbReference type="InterPro" id="IPR000454">
    <property type="entry name" value="ATP_synth_F0_csu"/>
</dbReference>
<dbReference type="InterPro" id="IPR020537">
    <property type="entry name" value="ATP_synth_F0_csu_DDCD_BS"/>
</dbReference>
<dbReference type="InterPro" id="IPR038662">
    <property type="entry name" value="ATP_synth_F0_csu_sf"/>
</dbReference>
<dbReference type="InterPro" id="IPR002379">
    <property type="entry name" value="ATPase_proteolipid_c-like_dom"/>
</dbReference>
<dbReference type="InterPro" id="IPR035921">
    <property type="entry name" value="F/V-ATP_Csub_sf"/>
</dbReference>
<dbReference type="NCBIfam" id="TIGR01260">
    <property type="entry name" value="ATP_synt_c"/>
    <property type="match status" value="1"/>
</dbReference>
<dbReference type="NCBIfam" id="NF005608">
    <property type="entry name" value="PRK07354.1"/>
    <property type="match status" value="1"/>
</dbReference>
<dbReference type="PANTHER" id="PTHR10031">
    <property type="entry name" value="ATP SYNTHASE LIPID-BINDING PROTEIN, MITOCHONDRIAL"/>
    <property type="match status" value="1"/>
</dbReference>
<dbReference type="PANTHER" id="PTHR10031:SF0">
    <property type="entry name" value="ATPASE PROTEIN 9"/>
    <property type="match status" value="1"/>
</dbReference>
<dbReference type="Pfam" id="PF00137">
    <property type="entry name" value="ATP-synt_C"/>
    <property type="match status" value="1"/>
</dbReference>
<dbReference type="PRINTS" id="PR00124">
    <property type="entry name" value="ATPASEC"/>
</dbReference>
<dbReference type="SUPFAM" id="SSF81333">
    <property type="entry name" value="F1F0 ATP synthase subunit C"/>
    <property type="match status" value="1"/>
</dbReference>
<dbReference type="PROSITE" id="PS00605">
    <property type="entry name" value="ATPASE_C"/>
    <property type="match status" value="1"/>
</dbReference>
<proteinExistence type="inferred from homology"/>
<reference key="1">
    <citation type="journal article" date="2006" name="BMC Plant Biol.">
        <title>Rapid and accurate pyrosequencing of angiosperm plastid genomes.</title>
        <authorList>
            <person name="Moore M.J."/>
            <person name="Dhingra A."/>
            <person name="Soltis P.S."/>
            <person name="Shaw R."/>
            <person name="Farmerie W.G."/>
            <person name="Folta K.M."/>
            <person name="Soltis D.E."/>
        </authorList>
    </citation>
    <scope>NUCLEOTIDE SEQUENCE [LARGE SCALE GENOMIC DNA]</scope>
</reference>
<protein>
    <recommendedName>
        <fullName evidence="1">ATP synthase subunit c, chloroplastic</fullName>
    </recommendedName>
    <alternativeName>
        <fullName evidence="1">ATP synthase F(0) sector subunit c</fullName>
    </alternativeName>
    <alternativeName>
        <fullName evidence="1">ATPase subunit III</fullName>
    </alternativeName>
    <alternativeName>
        <fullName evidence="1">F-type ATPase subunit c</fullName>
        <shortName evidence="1">F-ATPase subunit c</shortName>
    </alternativeName>
    <alternativeName>
        <fullName evidence="1">Lipid-binding protein</fullName>
    </alternativeName>
</protein>
<comment type="function">
    <text evidence="1">F(1)F(0) ATP synthase produces ATP from ADP in the presence of a proton or sodium gradient. F-type ATPases consist of two structural domains, F(1) containing the extramembraneous catalytic core and F(0) containing the membrane proton channel, linked together by a central stalk and a peripheral stalk. During catalysis, ATP synthesis in the catalytic domain of F(1) is coupled via a rotary mechanism of the central stalk subunits to proton translocation.</text>
</comment>
<comment type="function">
    <text evidence="1">Key component of the F(0) channel; it plays a direct role in translocation across the membrane. A homomeric c-ring of between 10-14 subunits forms the central stalk rotor element with the F(1) delta and epsilon subunits.</text>
</comment>
<comment type="subunit">
    <text evidence="1">F-type ATPases have 2 components, F(1) - the catalytic core - and F(0) - the membrane proton channel. F(1) has five subunits: alpha(3), beta(3), gamma(1), delta(1), epsilon(1). F(0) has four main subunits: a(1), b(1), b'(1) and c(10-14). The alpha and beta chains form an alternating ring which encloses part of the gamma chain. F(1) is attached to F(0) by a central stalk formed by the gamma and epsilon chains, while a peripheral stalk is formed by the delta, b and b' chains.</text>
</comment>
<comment type="subcellular location">
    <subcellularLocation>
        <location evidence="1">Plastid</location>
        <location evidence="1">Chloroplast thylakoid membrane</location>
        <topology evidence="1">Multi-pass membrane protein</topology>
    </subcellularLocation>
</comment>
<comment type="miscellaneous">
    <text>In plastids the F-type ATPase is also known as CF(1)CF(0).</text>
</comment>
<comment type="similarity">
    <text evidence="1">Belongs to the ATPase C chain family.</text>
</comment>
<keyword id="KW-0066">ATP synthesis</keyword>
<keyword id="KW-0138">CF(0)</keyword>
<keyword id="KW-0150">Chloroplast</keyword>
<keyword id="KW-0375">Hydrogen ion transport</keyword>
<keyword id="KW-0406">Ion transport</keyword>
<keyword id="KW-0446">Lipid-binding</keyword>
<keyword id="KW-0472">Membrane</keyword>
<keyword id="KW-0934">Plastid</keyword>
<keyword id="KW-0793">Thylakoid</keyword>
<keyword id="KW-0812">Transmembrane</keyword>
<keyword id="KW-1133">Transmembrane helix</keyword>
<keyword id="KW-0813">Transport</keyword>
<geneLocation type="chloroplast"/>
<name>ATPH_PLAOC</name>
<accession>Q09G59</accession>
<feature type="chain" id="PRO_0000362956" description="ATP synthase subunit c, chloroplastic">
    <location>
        <begin position="1"/>
        <end position="81"/>
    </location>
</feature>
<feature type="transmembrane region" description="Helical" evidence="1">
    <location>
        <begin position="3"/>
        <end position="23"/>
    </location>
</feature>
<feature type="transmembrane region" description="Helical" evidence="1">
    <location>
        <begin position="57"/>
        <end position="77"/>
    </location>
</feature>
<feature type="site" description="Reversibly protonated during proton transport" evidence="1">
    <location>
        <position position="61"/>
    </location>
</feature>
<evidence type="ECO:0000255" key="1">
    <source>
        <dbReference type="HAMAP-Rule" id="MF_01396"/>
    </source>
</evidence>
<gene>
    <name evidence="1" type="primary">atpH</name>
</gene>